<keyword id="KW-0227">DNA damage</keyword>
<keyword id="KW-0233">DNA recombination</keyword>
<keyword id="KW-0234">DNA repair</keyword>
<keyword id="KW-0479">Metal-binding</keyword>
<keyword id="KW-0862">Zinc</keyword>
<keyword id="KW-0863">Zinc-finger</keyword>
<gene>
    <name evidence="1" type="primary">recR</name>
    <name type="ordered locus">MUL_4306</name>
</gene>
<evidence type="ECO:0000255" key="1">
    <source>
        <dbReference type="HAMAP-Rule" id="MF_00017"/>
    </source>
</evidence>
<reference key="1">
    <citation type="journal article" date="2007" name="Genome Res.">
        <title>Reductive evolution and niche adaptation inferred from the genome of Mycobacterium ulcerans, the causative agent of Buruli ulcer.</title>
        <authorList>
            <person name="Stinear T.P."/>
            <person name="Seemann T."/>
            <person name="Pidot S."/>
            <person name="Frigui W."/>
            <person name="Reysset G."/>
            <person name="Garnier T."/>
            <person name="Meurice G."/>
            <person name="Simon D."/>
            <person name="Bouchier C."/>
            <person name="Ma L."/>
            <person name="Tichit M."/>
            <person name="Porter J.L."/>
            <person name="Ryan J."/>
            <person name="Johnson P.D.R."/>
            <person name="Davies J.K."/>
            <person name="Jenkin G.A."/>
            <person name="Small P.L.C."/>
            <person name="Jones L.M."/>
            <person name="Tekaia F."/>
            <person name="Laval F."/>
            <person name="Daffe M."/>
            <person name="Parkhill J."/>
            <person name="Cole S.T."/>
        </authorList>
    </citation>
    <scope>NUCLEOTIDE SEQUENCE [LARGE SCALE GENOMIC DNA]</scope>
    <source>
        <strain>Agy99</strain>
    </source>
</reference>
<protein>
    <recommendedName>
        <fullName evidence="1">Recombination protein RecR</fullName>
    </recommendedName>
</protein>
<comment type="function">
    <text evidence="1">May play a role in DNA repair. It seems to be involved in an RecBC-independent recombinational process of DNA repair. It may act with RecF and RecO.</text>
</comment>
<comment type="similarity">
    <text evidence="1">Belongs to the RecR family.</text>
</comment>
<organism>
    <name type="scientific">Mycobacterium ulcerans (strain Agy99)</name>
    <dbReference type="NCBI Taxonomy" id="362242"/>
    <lineage>
        <taxon>Bacteria</taxon>
        <taxon>Bacillati</taxon>
        <taxon>Actinomycetota</taxon>
        <taxon>Actinomycetes</taxon>
        <taxon>Mycobacteriales</taxon>
        <taxon>Mycobacteriaceae</taxon>
        <taxon>Mycobacterium</taxon>
        <taxon>Mycobacterium ulcerans group</taxon>
    </lineage>
</organism>
<name>RECR_MYCUA</name>
<dbReference type="EMBL" id="CP000325">
    <property type="protein sequence ID" value="ABL06321.1"/>
    <property type="molecule type" value="Genomic_DNA"/>
</dbReference>
<dbReference type="RefSeq" id="WP_011741923.1">
    <property type="nucleotide sequence ID" value="NC_008611.1"/>
</dbReference>
<dbReference type="SMR" id="A0PVF2"/>
<dbReference type="GeneID" id="93434881"/>
<dbReference type="KEGG" id="mul:MUL_4306"/>
<dbReference type="eggNOG" id="COG0353">
    <property type="taxonomic scope" value="Bacteria"/>
</dbReference>
<dbReference type="HOGENOM" id="CLU_060739_1_0_11"/>
<dbReference type="Proteomes" id="UP000000765">
    <property type="component" value="Chromosome"/>
</dbReference>
<dbReference type="GO" id="GO:0003677">
    <property type="term" value="F:DNA binding"/>
    <property type="evidence" value="ECO:0007669"/>
    <property type="project" value="UniProtKB-UniRule"/>
</dbReference>
<dbReference type="GO" id="GO:0008270">
    <property type="term" value="F:zinc ion binding"/>
    <property type="evidence" value="ECO:0007669"/>
    <property type="project" value="UniProtKB-KW"/>
</dbReference>
<dbReference type="GO" id="GO:0006310">
    <property type="term" value="P:DNA recombination"/>
    <property type="evidence" value="ECO:0007669"/>
    <property type="project" value="UniProtKB-UniRule"/>
</dbReference>
<dbReference type="GO" id="GO:0006281">
    <property type="term" value="P:DNA repair"/>
    <property type="evidence" value="ECO:0007669"/>
    <property type="project" value="UniProtKB-UniRule"/>
</dbReference>
<dbReference type="CDD" id="cd00080">
    <property type="entry name" value="H3TH_StructSpec-5'-nucleases"/>
    <property type="match status" value="1"/>
</dbReference>
<dbReference type="CDD" id="cd01025">
    <property type="entry name" value="TOPRIM_recR"/>
    <property type="match status" value="1"/>
</dbReference>
<dbReference type="Gene3D" id="3.30.60.80">
    <property type="match status" value="1"/>
</dbReference>
<dbReference type="Gene3D" id="3.40.1360.10">
    <property type="match status" value="1"/>
</dbReference>
<dbReference type="Gene3D" id="6.10.250.240">
    <property type="match status" value="1"/>
</dbReference>
<dbReference type="Gene3D" id="1.10.8.420">
    <property type="entry name" value="RecR Domain 1"/>
    <property type="match status" value="1"/>
</dbReference>
<dbReference type="HAMAP" id="MF_00017">
    <property type="entry name" value="RecR"/>
    <property type="match status" value="1"/>
</dbReference>
<dbReference type="InterPro" id="IPR000093">
    <property type="entry name" value="DNA_Rcmb_RecR"/>
</dbReference>
<dbReference type="InterPro" id="IPR003583">
    <property type="entry name" value="Hlx-hairpin-Hlx_DNA-bd_motif"/>
</dbReference>
<dbReference type="InterPro" id="IPR023627">
    <property type="entry name" value="Rcmb_RecR"/>
</dbReference>
<dbReference type="InterPro" id="IPR015967">
    <property type="entry name" value="Rcmb_RecR_Znf"/>
</dbReference>
<dbReference type="InterPro" id="IPR006171">
    <property type="entry name" value="TOPRIM_dom"/>
</dbReference>
<dbReference type="InterPro" id="IPR034137">
    <property type="entry name" value="TOPRIM_RecR"/>
</dbReference>
<dbReference type="NCBIfam" id="TIGR00615">
    <property type="entry name" value="recR"/>
    <property type="match status" value="1"/>
</dbReference>
<dbReference type="PANTHER" id="PTHR30446">
    <property type="entry name" value="RECOMBINATION PROTEIN RECR"/>
    <property type="match status" value="1"/>
</dbReference>
<dbReference type="PANTHER" id="PTHR30446:SF0">
    <property type="entry name" value="RECOMBINATION PROTEIN RECR"/>
    <property type="match status" value="1"/>
</dbReference>
<dbReference type="Pfam" id="PF21175">
    <property type="entry name" value="RecR_C"/>
    <property type="match status" value="1"/>
</dbReference>
<dbReference type="Pfam" id="PF21176">
    <property type="entry name" value="RecR_HhH"/>
    <property type="match status" value="1"/>
</dbReference>
<dbReference type="Pfam" id="PF02132">
    <property type="entry name" value="RecR_ZnF"/>
    <property type="match status" value="1"/>
</dbReference>
<dbReference type="Pfam" id="PF13662">
    <property type="entry name" value="Toprim_4"/>
    <property type="match status" value="1"/>
</dbReference>
<dbReference type="SMART" id="SM00278">
    <property type="entry name" value="HhH1"/>
    <property type="match status" value="1"/>
</dbReference>
<dbReference type="SMART" id="SM00493">
    <property type="entry name" value="TOPRIM"/>
    <property type="match status" value="1"/>
</dbReference>
<dbReference type="SUPFAM" id="SSF111304">
    <property type="entry name" value="Recombination protein RecR"/>
    <property type="match status" value="1"/>
</dbReference>
<dbReference type="PROSITE" id="PS01300">
    <property type="entry name" value="RECR"/>
    <property type="match status" value="1"/>
</dbReference>
<dbReference type="PROSITE" id="PS50880">
    <property type="entry name" value="TOPRIM"/>
    <property type="match status" value="1"/>
</dbReference>
<proteinExistence type="inferred from homology"/>
<sequence>MFEGPVQDLIDELGKLPGIGPKSAQRIAFHLLSVEPPDIDRLTAVLAKVRDGVRFCAVCGNVSDDERCRICADPRRDGALVCVVEEPKDIQAVERTREYRGRYHVLGGAFDPLSGIGPEQLRIRELLTRIGDRVDGVDITEVIIATDPNTEGEATATYLVRMLRDIPGLTVTRIASGLPMGGDLEFADELTLGRALTGRRAMV</sequence>
<feature type="chain" id="PRO_0000322917" description="Recombination protein RecR">
    <location>
        <begin position="1"/>
        <end position="203"/>
    </location>
</feature>
<feature type="domain" description="Toprim" evidence="1">
    <location>
        <begin position="79"/>
        <end position="179"/>
    </location>
</feature>
<feature type="zinc finger region" description="C4-type" evidence="1">
    <location>
        <begin position="56"/>
        <end position="71"/>
    </location>
</feature>
<accession>A0PVF2</accession>